<accession>C4JHZ6</accession>
<keyword id="KW-0325">Glycoprotein</keyword>
<keyword id="KW-0378">Hydrolase</keyword>
<keyword id="KW-0479">Metal-binding</keyword>
<keyword id="KW-0482">Metalloprotease</keyword>
<keyword id="KW-0645">Protease</keyword>
<keyword id="KW-1185">Reference proteome</keyword>
<keyword id="KW-0964">Secreted</keyword>
<keyword id="KW-0732">Signal</keyword>
<keyword id="KW-0862">Zinc</keyword>
<dbReference type="EC" id="3.4.-.-"/>
<dbReference type="EMBL" id="CH476615">
    <property type="protein sequence ID" value="EEP76572.1"/>
    <property type="molecule type" value="Genomic_DNA"/>
</dbReference>
<dbReference type="RefSeq" id="XP_002541905.1">
    <property type="nucleotide sequence ID" value="XM_002541859.1"/>
</dbReference>
<dbReference type="SMR" id="C4JHZ6"/>
<dbReference type="GeneID" id="8440675"/>
<dbReference type="KEGG" id="ure:UREG_01421"/>
<dbReference type="VEuPathDB" id="FungiDB:UREG_01421"/>
<dbReference type="eggNOG" id="KOG2195">
    <property type="taxonomic scope" value="Eukaryota"/>
</dbReference>
<dbReference type="HOGENOM" id="CLU_047420_0_0_1"/>
<dbReference type="InParanoid" id="C4JHZ6"/>
<dbReference type="OMA" id="NNDMIGN"/>
<dbReference type="OrthoDB" id="10013407at2759"/>
<dbReference type="Proteomes" id="UP000002058">
    <property type="component" value="Unassembled WGS sequence"/>
</dbReference>
<dbReference type="GO" id="GO:0005576">
    <property type="term" value="C:extracellular region"/>
    <property type="evidence" value="ECO:0007669"/>
    <property type="project" value="UniProtKB-SubCell"/>
</dbReference>
<dbReference type="GO" id="GO:0046872">
    <property type="term" value="F:metal ion binding"/>
    <property type="evidence" value="ECO:0007669"/>
    <property type="project" value="UniProtKB-KW"/>
</dbReference>
<dbReference type="GO" id="GO:0008235">
    <property type="term" value="F:metalloexopeptidase activity"/>
    <property type="evidence" value="ECO:0007669"/>
    <property type="project" value="InterPro"/>
</dbReference>
<dbReference type="GO" id="GO:0006508">
    <property type="term" value="P:proteolysis"/>
    <property type="evidence" value="ECO:0007669"/>
    <property type="project" value="UniProtKB-KW"/>
</dbReference>
<dbReference type="CDD" id="cd00063">
    <property type="entry name" value="FN3"/>
    <property type="match status" value="1"/>
</dbReference>
<dbReference type="CDD" id="cd05642">
    <property type="entry name" value="M28_like"/>
    <property type="match status" value="1"/>
</dbReference>
<dbReference type="Gene3D" id="3.40.630.10">
    <property type="entry name" value="Zn peptidases"/>
    <property type="match status" value="1"/>
</dbReference>
<dbReference type="InterPro" id="IPR003961">
    <property type="entry name" value="FN3_dom"/>
</dbReference>
<dbReference type="InterPro" id="IPR036116">
    <property type="entry name" value="FN3_sf"/>
</dbReference>
<dbReference type="InterPro" id="IPR045175">
    <property type="entry name" value="M28_fam"/>
</dbReference>
<dbReference type="InterPro" id="IPR007484">
    <property type="entry name" value="Peptidase_M28"/>
</dbReference>
<dbReference type="PANTHER" id="PTHR12147">
    <property type="entry name" value="METALLOPEPTIDASE M28 FAMILY MEMBER"/>
    <property type="match status" value="1"/>
</dbReference>
<dbReference type="PANTHER" id="PTHR12147:SF26">
    <property type="entry name" value="PEPTIDASE M28 DOMAIN-CONTAINING PROTEIN"/>
    <property type="match status" value="1"/>
</dbReference>
<dbReference type="Pfam" id="PF04389">
    <property type="entry name" value="Peptidase_M28"/>
    <property type="match status" value="1"/>
</dbReference>
<dbReference type="SUPFAM" id="SSF49265">
    <property type="entry name" value="Fibronectin type III"/>
    <property type="match status" value="1"/>
</dbReference>
<dbReference type="SUPFAM" id="SSF53187">
    <property type="entry name" value="Zn-dependent exopeptidases"/>
    <property type="match status" value="1"/>
</dbReference>
<dbReference type="PROSITE" id="PS50853">
    <property type="entry name" value="FN3"/>
    <property type="match status" value="1"/>
</dbReference>
<feature type="signal peptide" evidence="2">
    <location>
        <begin position="1"/>
        <end position="24"/>
    </location>
</feature>
<feature type="chain" id="PRO_0000411764" description="Probable zinc metalloprotease UREG_01421">
    <location>
        <begin position="25"/>
        <end position="503"/>
    </location>
</feature>
<feature type="domain" description="Fibronectin type-III" evidence="3">
    <location>
        <begin position="416"/>
        <end position="503"/>
    </location>
</feature>
<feature type="binding site" evidence="1">
    <location>
        <position position="176"/>
    </location>
    <ligand>
        <name>Zn(2+)</name>
        <dbReference type="ChEBI" id="CHEBI:29105"/>
        <label>1</label>
    </ligand>
</feature>
<feature type="binding site" evidence="1">
    <location>
        <position position="196"/>
    </location>
    <ligand>
        <name>Zn(2+)</name>
        <dbReference type="ChEBI" id="CHEBI:29105"/>
        <label>1</label>
    </ligand>
</feature>
<feature type="binding site" evidence="1">
    <location>
        <position position="196"/>
    </location>
    <ligand>
        <name>Zn(2+)</name>
        <dbReference type="ChEBI" id="CHEBI:29105"/>
        <label>2</label>
        <note>catalytic</note>
    </ligand>
</feature>
<feature type="binding site" evidence="1">
    <location>
        <position position="232"/>
    </location>
    <ligand>
        <name>Zn(2+)</name>
        <dbReference type="ChEBI" id="CHEBI:29105"/>
        <label>2</label>
        <note>catalytic</note>
    </ligand>
</feature>
<feature type="binding site" evidence="1">
    <location>
        <position position="259"/>
    </location>
    <ligand>
        <name>Zn(2+)</name>
        <dbReference type="ChEBI" id="CHEBI:29105"/>
        <label>1</label>
    </ligand>
</feature>
<feature type="glycosylation site" description="N-linked (GlcNAc...) asparagine" evidence="2">
    <location>
        <position position="105"/>
    </location>
</feature>
<feature type="glycosylation site" description="N-linked (GlcNAc...) asparagine" evidence="2">
    <location>
        <position position="247"/>
    </location>
</feature>
<feature type="glycosylation site" description="N-linked (GlcNAc...) asparagine" evidence="2">
    <location>
        <position position="429"/>
    </location>
</feature>
<proteinExistence type="inferred from homology"/>
<name>M28P2_UNCRE</name>
<organism>
    <name type="scientific">Uncinocarpus reesii (strain UAMH 1704)</name>
    <dbReference type="NCBI Taxonomy" id="336963"/>
    <lineage>
        <taxon>Eukaryota</taxon>
        <taxon>Fungi</taxon>
        <taxon>Dikarya</taxon>
        <taxon>Ascomycota</taxon>
        <taxon>Pezizomycotina</taxon>
        <taxon>Eurotiomycetes</taxon>
        <taxon>Eurotiomycetidae</taxon>
        <taxon>Onygenales</taxon>
        <taxon>Onygenaceae</taxon>
        <taxon>Uncinocarpus</taxon>
    </lineage>
</organism>
<reference key="1">
    <citation type="journal article" date="2009" name="Genome Res.">
        <title>Comparative genomic analyses of the human fungal pathogens Coccidioides and their relatives.</title>
        <authorList>
            <person name="Sharpton T.J."/>
            <person name="Stajich J.E."/>
            <person name="Rounsley S.D."/>
            <person name="Gardner M.J."/>
            <person name="Wortman J.R."/>
            <person name="Jordar V.S."/>
            <person name="Maiti R."/>
            <person name="Kodira C.D."/>
            <person name="Neafsey D.E."/>
            <person name="Zeng Q."/>
            <person name="Hung C.-Y."/>
            <person name="McMahan C."/>
            <person name="Muszewska A."/>
            <person name="Grynberg M."/>
            <person name="Mandel M.A."/>
            <person name="Kellner E.M."/>
            <person name="Barker B.M."/>
            <person name="Galgiani J.N."/>
            <person name="Orbach M.J."/>
            <person name="Kirkland T.N."/>
            <person name="Cole G.T."/>
            <person name="Henn M.R."/>
            <person name="Birren B.W."/>
            <person name="Taylor J.W."/>
        </authorList>
    </citation>
    <scope>NUCLEOTIDE SEQUENCE [LARGE SCALE GENOMIC DNA]</scope>
    <source>
        <strain>UAMH 1704</strain>
    </source>
</reference>
<comment type="cofactor">
    <cofactor evidence="1">
        <name>Zn(2+)</name>
        <dbReference type="ChEBI" id="CHEBI:29105"/>
    </cofactor>
    <text evidence="1">Binds 2 Zn(2+) ions per subunit.</text>
</comment>
<comment type="subcellular location">
    <subcellularLocation>
        <location evidence="4">Secreted</location>
    </subcellularLocation>
</comment>
<comment type="similarity">
    <text evidence="4">Belongs to the peptidase M28 family. M28B subfamily.</text>
</comment>
<evidence type="ECO:0000250" key="1"/>
<evidence type="ECO:0000255" key="2"/>
<evidence type="ECO:0000255" key="3">
    <source>
        <dbReference type="PROSITE-ProRule" id="PRU00316"/>
    </source>
</evidence>
<evidence type="ECO:0000305" key="4"/>
<gene>
    <name type="ORF">UREG_01421</name>
</gene>
<sequence>MHSLSSALAGSTFVLLFLCLLASAQPLTTPNPARALPDALTGGSSIFSCPAASWPPTRIGSPNRPQRPSRELRSILSQISHKRIEASILKLVSFGTRHTLSTQTNATHGIGAARDWIASEFKRYADASDGRLSVDVIGYEQQPDGNRIPFPVRISDVVATLKGTEEPERIYLISGHYDSRVTDVNDYTSFAPGANDDASGVAVSLELARVMSQPHFPRPRATLVFAAVAGEEQGLYGSRFLAETYRNKSANIEGMFTNDIVGSSTADDGTRDPHVVRLFGQGLPPLTVEDQKQRETRLTIGGENDTPARQLSRFVKETAENEHTDMRVSVIYRLDRYLRGGDHRPFLEAGYPAARFTEPHENFAHQHQDVRVETDPKTGRKKQYGDLPEFCDFRYIARVGKVNAAALWSLANSPGMPRNVRVSTRDLSNDSKFFWDPPVGGNEGVGGYEIVWRSTVAPFWTHVLDVGMAREATVDLSKDNVIFGIRARGKNGERGVAVLPFPA</sequence>
<protein>
    <recommendedName>
        <fullName>Probable zinc metalloprotease UREG_01421</fullName>
        <ecNumber>3.4.-.-</ecNumber>
    </recommendedName>
</protein>